<accession>B3R899</accession>
<reference key="1">
    <citation type="journal article" date="2008" name="Genome Res.">
        <title>Genome sequence of the beta-rhizobium Cupriavidus taiwanensis and comparative genomics of rhizobia.</title>
        <authorList>
            <person name="Amadou C."/>
            <person name="Pascal G."/>
            <person name="Mangenot S."/>
            <person name="Glew M."/>
            <person name="Bontemps C."/>
            <person name="Capela D."/>
            <person name="Carrere S."/>
            <person name="Cruveiller S."/>
            <person name="Dossat C."/>
            <person name="Lajus A."/>
            <person name="Marchetti M."/>
            <person name="Poinsot V."/>
            <person name="Rouy Z."/>
            <person name="Servin B."/>
            <person name="Saad M."/>
            <person name="Schenowitz C."/>
            <person name="Barbe V."/>
            <person name="Batut J."/>
            <person name="Medigue C."/>
            <person name="Masson-Boivin C."/>
        </authorList>
    </citation>
    <scope>NUCLEOTIDE SEQUENCE [LARGE SCALE GENOMIC DNA]</scope>
    <source>
        <strain>DSM 17343 / BCRC 17206 / CCUG 44338 / CIP 107171 / LMG 19424 / R1</strain>
    </source>
</reference>
<evidence type="ECO:0000255" key="1">
    <source>
        <dbReference type="HAMAP-Rule" id="MF_00539"/>
    </source>
</evidence>
<evidence type="ECO:0000256" key="2">
    <source>
        <dbReference type="SAM" id="MobiDB-lite"/>
    </source>
</evidence>
<evidence type="ECO:0000305" key="3"/>
<organism>
    <name type="scientific">Cupriavidus taiwanensis (strain DSM 17343 / BCRC 17206 / CCUG 44338 / CIP 107171 / LMG 19424 / R1)</name>
    <name type="common">Ralstonia taiwanensis (strain LMG 19424)</name>
    <dbReference type="NCBI Taxonomy" id="977880"/>
    <lineage>
        <taxon>Bacteria</taxon>
        <taxon>Pseudomonadati</taxon>
        <taxon>Pseudomonadota</taxon>
        <taxon>Betaproteobacteria</taxon>
        <taxon>Burkholderiales</taxon>
        <taxon>Burkholderiaceae</taxon>
        <taxon>Cupriavidus</taxon>
    </lineage>
</organism>
<keyword id="KW-0687">Ribonucleoprotein</keyword>
<keyword id="KW-0689">Ribosomal protein</keyword>
<comment type="similarity">
    <text evidence="1">Belongs to the bacterial ribosomal protein bL27 family.</text>
</comment>
<feature type="chain" id="PRO_1000128729" description="Large ribosomal subunit protein bL27">
    <location>
        <begin position="1"/>
        <end position="86"/>
    </location>
</feature>
<feature type="region of interest" description="Disordered" evidence="2">
    <location>
        <begin position="1"/>
        <end position="21"/>
    </location>
</feature>
<feature type="compositionally biased region" description="Gly residues" evidence="2">
    <location>
        <begin position="1"/>
        <end position="10"/>
    </location>
</feature>
<proteinExistence type="inferred from homology"/>
<dbReference type="EMBL" id="CU633749">
    <property type="protein sequence ID" value="CAQ70635.1"/>
    <property type="molecule type" value="Genomic_DNA"/>
</dbReference>
<dbReference type="RefSeq" id="WP_012353931.1">
    <property type="nucleotide sequence ID" value="NC_010528.1"/>
</dbReference>
<dbReference type="SMR" id="B3R899"/>
<dbReference type="GeneID" id="29760251"/>
<dbReference type="KEGG" id="cti:RALTA_A2704"/>
<dbReference type="eggNOG" id="COG0211">
    <property type="taxonomic scope" value="Bacteria"/>
</dbReference>
<dbReference type="HOGENOM" id="CLU_095424_4_1_4"/>
<dbReference type="BioCyc" id="CTAI977880:RALTA_RS13155-MONOMER"/>
<dbReference type="Proteomes" id="UP000001692">
    <property type="component" value="Chromosome 1"/>
</dbReference>
<dbReference type="GO" id="GO:0022625">
    <property type="term" value="C:cytosolic large ribosomal subunit"/>
    <property type="evidence" value="ECO:0007669"/>
    <property type="project" value="TreeGrafter"/>
</dbReference>
<dbReference type="GO" id="GO:0003735">
    <property type="term" value="F:structural constituent of ribosome"/>
    <property type="evidence" value="ECO:0007669"/>
    <property type="project" value="InterPro"/>
</dbReference>
<dbReference type="GO" id="GO:0006412">
    <property type="term" value="P:translation"/>
    <property type="evidence" value="ECO:0007669"/>
    <property type="project" value="UniProtKB-UniRule"/>
</dbReference>
<dbReference type="FunFam" id="2.40.50.100:FF:000001">
    <property type="entry name" value="50S ribosomal protein L27"/>
    <property type="match status" value="1"/>
</dbReference>
<dbReference type="Gene3D" id="2.40.50.100">
    <property type="match status" value="1"/>
</dbReference>
<dbReference type="HAMAP" id="MF_00539">
    <property type="entry name" value="Ribosomal_bL27"/>
    <property type="match status" value="1"/>
</dbReference>
<dbReference type="InterPro" id="IPR001684">
    <property type="entry name" value="Ribosomal_bL27"/>
</dbReference>
<dbReference type="InterPro" id="IPR018261">
    <property type="entry name" value="Ribosomal_bL27_CS"/>
</dbReference>
<dbReference type="NCBIfam" id="TIGR00062">
    <property type="entry name" value="L27"/>
    <property type="match status" value="1"/>
</dbReference>
<dbReference type="PANTHER" id="PTHR15893:SF0">
    <property type="entry name" value="LARGE RIBOSOMAL SUBUNIT PROTEIN BL27M"/>
    <property type="match status" value="1"/>
</dbReference>
<dbReference type="PANTHER" id="PTHR15893">
    <property type="entry name" value="RIBOSOMAL PROTEIN L27"/>
    <property type="match status" value="1"/>
</dbReference>
<dbReference type="Pfam" id="PF01016">
    <property type="entry name" value="Ribosomal_L27"/>
    <property type="match status" value="1"/>
</dbReference>
<dbReference type="PRINTS" id="PR00063">
    <property type="entry name" value="RIBOSOMALL27"/>
</dbReference>
<dbReference type="SUPFAM" id="SSF110324">
    <property type="entry name" value="Ribosomal L27 protein-like"/>
    <property type="match status" value="1"/>
</dbReference>
<dbReference type="PROSITE" id="PS00831">
    <property type="entry name" value="RIBOSOMAL_L27"/>
    <property type="match status" value="1"/>
</dbReference>
<sequence>MAQKKGGGSTRNGRDSESKRLGVKVFGGQAINAGGIIVRQRGTRVHAGDNVGVGKDHTLFALIDGHVQFAVKGPAKKQQVSVVPAA</sequence>
<gene>
    <name evidence="1" type="primary">rpmA</name>
    <name type="ordered locus">RALTA_A2704</name>
</gene>
<protein>
    <recommendedName>
        <fullName evidence="1">Large ribosomal subunit protein bL27</fullName>
    </recommendedName>
    <alternativeName>
        <fullName evidence="3">50S ribosomal protein L27</fullName>
    </alternativeName>
</protein>
<name>RL27_CUPTR</name>